<comment type="function">
    <text evidence="1">Forms an efflux pump with AaeA. Could function as a metabolic relief valve, allowing to eliminate certain compounds when they accumulate to high levels in the cell.</text>
</comment>
<comment type="subcellular location">
    <subcellularLocation>
        <location evidence="1">Cell inner membrane</location>
        <topology evidence="1">Multi-pass membrane protein</topology>
    </subcellularLocation>
</comment>
<comment type="similarity">
    <text evidence="1">Belongs to the aromatic acid exporter ArAE (TC 2.A.85) family.</text>
</comment>
<keyword id="KW-0997">Cell inner membrane</keyword>
<keyword id="KW-1003">Cell membrane</keyword>
<keyword id="KW-0472">Membrane</keyword>
<keyword id="KW-0812">Transmembrane</keyword>
<keyword id="KW-1133">Transmembrane helix</keyword>
<keyword id="KW-0813">Transport</keyword>
<sequence>MTSPTFIRLRFAFKLSFAIVAALFLGFHLQLETPRWSVLTAAIVAAGPAFAAGGEPFSGAIRHRGWLRIIGTFIGCIGGLIIIVLTIRAPVLTLMLCCLWAGVCTWISSLVRVENSYAFGLAGYTALIIIVTTGETPLLTPQFAVERCSEIVLGIVCAVMADLLFSPRSIKQDIDRLVDKVLLDQYRLLQLCIRPAEKTDIDRAWNDLVKNTTALNGMRSYLMMESSRWQRCNRRLQVLHTESLTLITQACETYLVLANHPDILTAELKAMLSEPAPTPAEIHQRMKTLRQFIAVSHSEAIPHTISSWVGAATRYLLLAKGIHTNSSISRVEEGILAGVVPVKHVSAEGHHAMINGLRTGVATAIGGLFWLWTGWTSGAGCMVMIAVVTSLAMRTPNPRMVAIDFLLGVIMALPIGALYFMFIIPATQQSMLLLCISLGLLAFIIGIEVQKRRLGSLGTLASTINIMVLSNPMEFNVSLFLDSALGQIVGCFVSLIVLLLIRDNAKDRTGRTLLNRFVYSAVSALTTNKARRNENHLPALYQQLNQLLMMFPGDIDKYRLALTLIIAHQRLNKTEVPVNAELSAFHKQIRYTADRVINAKNSQKRRYYFARLLQELDQYQQKLVDYQSPDAVTRPVKRLADMLHKYQSALI</sequence>
<feature type="chain" id="PRO_0000300569" description="p-hydroxybenzoic acid efflux pump subunit AaeB">
    <location>
        <begin position="1"/>
        <end position="651"/>
    </location>
</feature>
<feature type="transmembrane region" description="Helical" evidence="1">
    <location>
        <begin position="11"/>
        <end position="31"/>
    </location>
</feature>
<feature type="transmembrane region" description="Helical" evidence="1">
    <location>
        <begin position="41"/>
        <end position="61"/>
    </location>
</feature>
<feature type="transmembrane region" description="Helical" evidence="1">
    <location>
        <begin position="67"/>
        <end position="87"/>
    </location>
</feature>
<feature type="transmembrane region" description="Helical" evidence="1">
    <location>
        <begin position="91"/>
        <end position="111"/>
    </location>
</feature>
<feature type="transmembrane region" description="Helical" evidence="1">
    <location>
        <begin position="119"/>
        <end position="139"/>
    </location>
</feature>
<feature type="transmembrane region" description="Helical" evidence="1">
    <location>
        <begin position="150"/>
        <end position="170"/>
    </location>
</feature>
<feature type="transmembrane region" description="Helical" evidence="1">
    <location>
        <begin position="368"/>
        <end position="388"/>
    </location>
</feature>
<feature type="transmembrane region" description="Helical" evidence="1">
    <location>
        <begin position="405"/>
        <end position="425"/>
    </location>
</feature>
<feature type="transmembrane region" description="Helical" evidence="1">
    <location>
        <begin position="429"/>
        <end position="449"/>
    </location>
</feature>
<feature type="transmembrane region" description="Helical" evidence="1">
    <location>
        <begin position="460"/>
        <end position="480"/>
    </location>
</feature>
<feature type="transmembrane region" description="Helical" evidence="1">
    <location>
        <begin position="481"/>
        <end position="501"/>
    </location>
</feature>
<evidence type="ECO:0000255" key="1">
    <source>
        <dbReference type="HAMAP-Rule" id="MF_01545"/>
    </source>
</evidence>
<name>AAEB_YERE8</name>
<organism>
    <name type="scientific">Yersinia enterocolitica serotype O:8 / biotype 1B (strain NCTC 13174 / 8081)</name>
    <dbReference type="NCBI Taxonomy" id="393305"/>
    <lineage>
        <taxon>Bacteria</taxon>
        <taxon>Pseudomonadati</taxon>
        <taxon>Pseudomonadota</taxon>
        <taxon>Gammaproteobacteria</taxon>
        <taxon>Enterobacterales</taxon>
        <taxon>Yersiniaceae</taxon>
        <taxon>Yersinia</taxon>
    </lineage>
</organism>
<protein>
    <recommendedName>
        <fullName evidence="1">p-hydroxybenzoic acid efflux pump subunit AaeB</fullName>
        <shortName evidence="1">pHBA efflux pump protein B</shortName>
    </recommendedName>
</protein>
<reference key="1">
    <citation type="journal article" date="2006" name="PLoS Genet.">
        <title>The complete genome sequence and comparative genome analysis of the high pathogenicity Yersinia enterocolitica strain 8081.</title>
        <authorList>
            <person name="Thomson N.R."/>
            <person name="Howard S."/>
            <person name="Wren B.W."/>
            <person name="Holden M.T.G."/>
            <person name="Crossman L."/>
            <person name="Challis G.L."/>
            <person name="Churcher C."/>
            <person name="Mungall K."/>
            <person name="Brooks K."/>
            <person name="Chillingworth T."/>
            <person name="Feltwell T."/>
            <person name="Abdellah Z."/>
            <person name="Hauser H."/>
            <person name="Jagels K."/>
            <person name="Maddison M."/>
            <person name="Moule S."/>
            <person name="Sanders M."/>
            <person name="Whitehead S."/>
            <person name="Quail M.A."/>
            <person name="Dougan G."/>
            <person name="Parkhill J."/>
            <person name="Prentice M.B."/>
        </authorList>
    </citation>
    <scope>NUCLEOTIDE SEQUENCE [LARGE SCALE GENOMIC DNA]</scope>
    <source>
        <strain>NCTC 13174 / 8081</strain>
    </source>
</reference>
<dbReference type="EMBL" id="AM286415">
    <property type="protein sequence ID" value="CAL13818.1"/>
    <property type="molecule type" value="Genomic_DNA"/>
</dbReference>
<dbReference type="RefSeq" id="WP_011817278.1">
    <property type="nucleotide sequence ID" value="NC_008800.1"/>
</dbReference>
<dbReference type="RefSeq" id="YP_001007945.1">
    <property type="nucleotide sequence ID" value="NC_008800.1"/>
</dbReference>
<dbReference type="SMR" id="A1JRH8"/>
<dbReference type="KEGG" id="yen:YE3794"/>
<dbReference type="PATRIC" id="fig|393305.7.peg.4041"/>
<dbReference type="eggNOG" id="COG1289">
    <property type="taxonomic scope" value="Bacteria"/>
</dbReference>
<dbReference type="HOGENOM" id="CLU_027647_0_0_6"/>
<dbReference type="OrthoDB" id="9807111at2"/>
<dbReference type="Proteomes" id="UP000000642">
    <property type="component" value="Chromosome"/>
</dbReference>
<dbReference type="GO" id="GO:0005886">
    <property type="term" value="C:plasma membrane"/>
    <property type="evidence" value="ECO:0007669"/>
    <property type="project" value="UniProtKB-SubCell"/>
</dbReference>
<dbReference type="GO" id="GO:0022857">
    <property type="term" value="F:transmembrane transporter activity"/>
    <property type="evidence" value="ECO:0007669"/>
    <property type="project" value="UniProtKB-UniRule"/>
</dbReference>
<dbReference type="GO" id="GO:0046942">
    <property type="term" value="P:carboxylic acid transport"/>
    <property type="evidence" value="ECO:0007669"/>
    <property type="project" value="InterPro"/>
</dbReference>
<dbReference type="HAMAP" id="MF_01545">
    <property type="entry name" value="AaeB"/>
    <property type="match status" value="1"/>
</dbReference>
<dbReference type="InterPro" id="IPR006726">
    <property type="entry name" value="PHBA_efflux_AaeB/fusaric-R"/>
</dbReference>
<dbReference type="InterPro" id="IPR023706">
    <property type="entry name" value="PHBA_efflux_pump_AaeB"/>
</dbReference>
<dbReference type="NCBIfam" id="NF007916">
    <property type="entry name" value="PRK10631.1"/>
    <property type="match status" value="1"/>
</dbReference>
<dbReference type="PANTHER" id="PTHR30509:SF9">
    <property type="entry name" value="MULTIDRUG RESISTANCE PROTEIN MDTO"/>
    <property type="match status" value="1"/>
</dbReference>
<dbReference type="PANTHER" id="PTHR30509">
    <property type="entry name" value="P-HYDROXYBENZOIC ACID EFFLUX PUMP SUBUNIT-RELATED"/>
    <property type="match status" value="1"/>
</dbReference>
<dbReference type="Pfam" id="PF04632">
    <property type="entry name" value="FUSC"/>
    <property type="match status" value="1"/>
</dbReference>
<proteinExistence type="inferred from homology"/>
<accession>A1JRH8</accession>
<gene>
    <name evidence="1" type="primary">aaeB</name>
    <name type="ordered locus">YE3794</name>
</gene>